<proteinExistence type="evidence at protein level"/>
<protein>
    <recommendedName>
        <fullName evidence="2">Large ribosomal subunit protein uL5</fullName>
    </recommendedName>
    <alternativeName>
        <fullName evidence="3">50S ribosomal protein L5</fullName>
    </alternativeName>
</protein>
<keyword id="KW-0002">3D-structure</keyword>
<keyword id="KW-0687">Ribonucleoprotein</keyword>
<keyword id="KW-0689">Ribosomal protein</keyword>
<keyword id="KW-0694">RNA-binding</keyword>
<keyword id="KW-0699">rRNA-binding</keyword>
<keyword id="KW-0820">tRNA-binding</keyword>
<evidence type="ECO:0000250" key="1"/>
<evidence type="ECO:0000255" key="2">
    <source>
        <dbReference type="HAMAP-Rule" id="MF_01333"/>
    </source>
</evidence>
<evidence type="ECO:0000305" key="3"/>
<evidence type="ECO:0007829" key="4">
    <source>
        <dbReference type="PDB" id="4V63"/>
    </source>
</evidence>
<evidence type="ECO:0007829" key="5">
    <source>
        <dbReference type="PDB" id="4V67"/>
    </source>
</evidence>
<evidence type="ECO:0007829" key="6">
    <source>
        <dbReference type="PDB" id="4V84"/>
    </source>
</evidence>
<evidence type="ECO:0007829" key="7">
    <source>
        <dbReference type="PDB" id="4V9K"/>
    </source>
</evidence>
<feature type="initiator methionine" description="Removed" evidence="1">
    <location>
        <position position="1"/>
    </location>
</feature>
<feature type="chain" id="PRO_0000125013" description="Large ribosomal subunit protein uL5">
    <location>
        <begin position="2"/>
        <end position="182"/>
    </location>
</feature>
<feature type="helix" evidence="5">
    <location>
        <begin position="6"/>
        <end position="12"/>
    </location>
</feature>
<feature type="helix" evidence="5">
    <location>
        <begin position="15"/>
        <end position="22"/>
    </location>
</feature>
<feature type="turn" evidence="4">
    <location>
        <begin position="28"/>
        <end position="30"/>
    </location>
</feature>
<feature type="strand" evidence="5">
    <location>
        <begin position="36"/>
        <end position="39"/>
    </location>
</feature>
<feature type="turn" evidence="4">
    <location>
        <begin position="45"/>
        <end position="48"/>
    </location>
</feature>
<feature type="helix" evidence="5">
    <location>
        <begin position="50"/>
        <end position="64"/>
    </location>
</feature>
<feature type="strand" evidence="7">
    <location>
        <begin position="69"/>
        <end position="71"/>
    </location>
</feature>
<feature type="turn" evidence="5">
    <location>
        <begin position="78"/>
        <end position="81"/>
    </location>
</feature>
<feature type="strand" evidence="5">
    <location>
        <begin position="90"/>
        <end position="94"/>
    </location>
</feature>
<feature type="helix" evidence="5">
    <location>
        <begin position="96"/>
        <end position="108"/>
    </location>
</feature>
<feature type="helix" evidence="5">
    <location>
        <begin position="110"/>
        <end position="113"/>
    </location>
</feature>
<feature type="helix" evidence="6">
    <location>
        <begin position="122"/>
        <end position="124"/>
    </location>
</feature>
<feature type="strand" evidence="5">
    <location>
        <begin position="127"/>
        <end position="136"/>
    </location>
</feature>
<feature type="helix" evidence="5">
    <location>
        <begin position="138"/>
        <end position="140"/>
    </location>
</feature>
<feature type="strand" evidence="4">
    <location>
        <begin position="141"/>
        <end position="143"/>
    </location>
</feature>
<feature type="turn" evidence="5">
    <location>
        <begin position="146"/>
        <end position="148"/>
    </location>
</feature>
<feature type="strand" evidence="5">
    <location>
        <begin position="155"/>
        <end position="165"/>
    </location>
</feature>
<feature type="helix" evidence="5">
    <location>
        <begin position="166"/>
        <end position="175"/>
    </location>
</feature>
<organism>
    <name type="scientific">Thermus thermophilus (strain ATCC BAA-163 / DSM 7039 / HB27)</name>
    <dbReference type="NCBI Taxonomy" id="262724"/>
    <lineage>
        <taxon>Bacteria</taxon>
        <taxon>Thermotogati</taxon>
        <taxon>Deinococcota</taxon>
        <taxon>Deinococci</taxon>
        <taxon>Thermales</taxon>
        <taxon>Thermaceae</taxon>
        <taxon>Thermus</taxon>
    </lineage>
</organism>
<gene>
    <name evidence="2" type="primary">rplE</name>
    <name type="ordered locus">TT_C1316</name>
</gene>
<sequence length="182" mass="21044">MPLDLALKRKYYEEVRPELIRRFGYQNVWEVPRLEKVVINQGLGEAKEDARILEKAAQELALITGQKPAVTRAKKSISNFKLRKGMPIGLRVTLRRDRMWIFLEKLLNVALPRIRDFRGLNPNSFDGRGNYNLGLREQLIFPEITYDMVDALRGMDIAVVTTAETDEEARALLELLGFPFRK</sequence>
<dbReference type="EMBL" id="AE017221">
    <property type="protein sequence ID" value="AAS81658.1"/>
    <property type="molecule type" value="Genomic_DNA"/>
</dbReference>
<dbReference type="RefSeq" id="WP_011173706.1">
    <property type="nucleotide sequence ID" value="NC_005835.1"/>
</dbReference>
<dbReference type="PDB" id="4V4I">
    <property type="method" value="X-ray"/>
    <property type="resolution" value="3.71 A"/>
    <property type="chains" value="E=1-182"/>
</dbReference>
<dbReference type="PDB" id="4V4J">
    <property type="method" value="X-ray"/>
    <property type="resolution" value="3.83 A"/>
    <property type="chains" value="E=1-182"/>
</dbReference>
<dbReference type="PDB" id="4V63">
    <property type="method" value="X-ray"/>
    <property type="resolution" value="3.21 A"/>
    <property type="chains" value="BG/DG=1-182"/>
</dbReference>
<dbReference type="PDB" id="4V67">
    <property type="method" value="X-ray"/>
    <property type="resolution" value="3.00 A"/>
    <property type="chains" value="BG/DG=1-182"/>
</dbReference>
<dbReference type="PDB" id="4V7P">
    <property type="method" value="X-ray"/>
    <property type="resolution" value="3.62 A"/>
    <property type="chains" value="BF/CF=2-182"/>
</dbReference>
<dbReference type="PDB" id="4V83">
    <property type="method" value="X-ray"/>
    <property type="resolution" value="3.50 A"/>
    <property type="chains" value="BF/DF=2-182"/>
</dbReference>
<dbReference type="PDB" id="4V84">
    <property type="method" value="X-ray"/>
    <property type="resolution" value="3.40 A"/>
    <property type="chains" value="BF/DF=2-182"/>
</dbReference>
<dbReference type="PDB" id="4V9J">
    <property type="method" value="X-ray"/>
    <property type="resolution" value="3.86 A"/>
    <property type="chains" value="BG/DG=2-182"/>
</dbReference>
<dbReference type="PDB" id="4V9K">
    <property type="method" value="X-ray"/>
    <property type="resolution" value="3.50 A"/>
    <property type="chains" value="BG/DG=2-182"/>
</dbReference>
<dbReference type="PDB" id="4V9L">
    <property type="method" value="X-ray"/>
    <property type="resolution" value="3.50 A"/>
    <property type="chains" value="BG/DG=2-182"/>
</dbReference>
<dbReference type="PDB" id="4V9M">
    <property type="method" value="X-ray"/>
    <property type="resolution" value="4.00 A"/>
    <property type="chains" value="BG/DG=2-182"/>
</dbReference>
<dbReference type="PDB" id="4V9N">
    <property type="method" value="X-ray"/>
    <property type="resolution" value="3.40 A"/>
    <property type="chains" value="BG/DG=2-182"/>
</dbReference>
<dbReference type="PDB" id="4V9Q">
    <property type="method" value="X-ray"/>
    <property type="resolution" value="3.40 A"/>
    <property type="chains" value="AG/CG=2-182"/>
</dbReference>
<dbReference type="PDB" id="4W29">
    <property type="method" value="X-ray"/>
    <property type="resolution" value="3.80 A"/>
    <property type="chains" value="BG/DG=2-182"/>
</dbReference>
<dbReference type="PDB" id="4XEJ">
    <property type="method" value="X-ray"/>
    <property type="resolution" value="3.80 A"/>
    <property type="chains" value="AL05/BL05=2-182"/>
</dbReference>
<dbReference type="PDB" id="5J4D">
    <property type="method" value="X-ray"/>
    <property type="resolution" value="3.10 A"/>
    <property type="chains" value="H/MB=1-182"/>
</dbReference>
<dbReference type="PDB" id="5V8I">
    <property type="method" value="X-ray"/>
    <property type="resolution" value="3.25 A"/>
    <property type="chains" value="1G/2G=1-182"/>
</dbReference>
<dbReference type="PDB" id="6B4V">
    <property type="method" value="X-ray"/>
    <property type="resolution" value="3.40 A"/>
    <property type="chains" value="H/LB=1-182"/>
</dbReference>
<dbReference type="PDB" id="6BOH">
    <property type="method" value="X-ray"/>
    <property type="resolution" value="3.40 A"/>
    <property type="chains" value="H/MB=1-182"/>
</dbReference>
<dbReference type="PDB" id="6BOK">
    <property type="method" value="X-ray"/>
    <property type="resolution" value="3.55 A"/>
    <property type="chains" value="H/KB=1-182"/>
</dbReference>
<dbReference type="PDB" id="6N1D">
    <property type="method" value="X-ray"/>
    <property type="resolution" value="3.20 A"/>
    <property type="chains" value="AL05/BL05=2-182"/>
</dbReference>
<dbReference type="PDBsum" id="4V4I"/>
<dbReference type="PDBsum" id="4V4J"/>
<dbReference type="PDBsum" id="4V63"/>
<dbReference type="PDBsum" id="4V67"/>
<dbReference type="PDBsum" id="4V7P"/>
<dbReference type="PDBsum" id="4V83"/>
<dbReference type="PDBsum" id="4V84"/>
<dbReference type="PDBsum" id="4V9J"/>
<dbReference type="PDBsum" id="4V9K"/>
<dbReference type="PDBsum" id="4V9L"/>
<dbReference type="PDBsum" id="4V9M"/>
<dbReference type="PDBsum" id="4V9N"/>
<dbReference type="PDBsum" id="4V9Q"/>
<dbReference type="PDBsum" id="4W29"/>
<dbReference type="PDBsum" id="4XEJ"/>
<dbReference type="PDBsum" id="5J4D"/>
<dbReference type="PDBsum" id="5V8I"/>
<dbReference type="PDBsum" id="6B4V"/>
<dbReference type="PDBsum" id="6BOH"/>
<dbReference type="PDBsum" id="6BOK"/>
<dbReference type="PDBsum" id="6N1D"/>
<dbReference type="SMR" id="Q72I16"/>
<dbReference type="IntAct" id="Q72I16">
    <property type="interactions" value="4"/>
</dbReference>
<dbReference type="KEGG" id="tth:TT_C1316"/>
<dbReference type="eggNOG" id="COG0094">
    <property type="taxonomic scope" value="Bacteria"/>
</dbReference>
<dbReference type="HOGENOM" id="CLU_061015_2_1_0"/>
<dbReference type="OrthoDB" id="9806626at2"/>
<dbReference type="Proteomes" id="UP000000592">
    <property type="component" value="Chromosome"/>
</dbReference>
<dbReference type="GO" id="GO:1990904">
    <property type="term" value="C:ribonucleoprotein complex"/>
    <property type="evidence" value="ECO:0007669"/>
    <property type="project" value="UniProtKB-KW"/>
</dbReference>
<dbReference type="GO" id="GO:0005840">
    <property type="term" value="C:ribosome"/>
    <property type="evidence" value="ECO:0007669"/>
    <property type="project" value="UniProtKB-KW"/>
</dbReference>
<dbReference type="GO" id="GO:0019843">
    <property type="term" value="F:rRNA binding"/>
    <property type="evidence" value="ECO:0007669"/>
    <property type="project" value="UniProtKB-UniRule"/>
</dbReference>
<dbReference type="GO" id="GO:0003735">
    <property type="term" value="F:structural constituent of ribosome"/>
    <property type="evidence" value="ECO:0007669"/>
    <property type="project" value="InterPro"/>
</dbReference>
<dbReference type="GO" id="GO:0000049">
    <property type="term" value="F:tRNA binding"/>
    <property type="evidence" value="ECO:0007669"/>
    <property type="project" value="UniProtKB-UniRule"/>
</dbReference>
<dbReference type="GO" id="GO:0006412">
    <property type="term" value="P:translation"/>
    <property type="evidence" value="ECO:0007669"/>
    <property type="project" value="UniProtKB-UniRule"/>
</dbReference>
<dbReference type="FunFam" id="3.30.1440.10:FF:000001">
    <property type="entry name" value="50S ribosomal protein L5"/>
    <property type="match status" value="1"/>
</dbReference>
<dbReference type="Gene3D" id="3.30.1440.10">
    <property type="match status" value="1"/>
</dbReference>
<dbReference type="HAMAP" id="MF_01333_B">
    <property type="entry name" value="Ribosomal_uL5_B"/>
    <property type="match status" value="1"/>
</dbReference>
<dbReference type="InterPro" id="IPR002132">
    <property type="entry name" value="Ribosomal_uL5"/>
</dbReference>
<dbReference type="InterPro" id="IPR020930">
    <property type="entry name" value="Ribosomal_uL5_bac-type"/>
</dbReference>
<dbReference type="InterPro" id="IPR031309">
    <property type="entry name" value="Ribosomal_uL5_C"/>
</dbReference>
<dbReference type="InterPro" id="IPR020929">
    <property type="entry name" value="Ribosomal_uL5_CS"/>
</dbReference>
<dbReference type="InterPro" id="IPR022803">
    <property type="entry name" value="Ribosomal_uL5_dom_sf"/>
</dbReference>
<dbReference type="InterPro" id="IPR031310">
    <property type="entry name" value="Ribosomal_uL5_N"/>
</dbReference>
<dbReference type="NCBIfam" id="NF000585">
    <property type="entry name" value="PRK00010.1"/>
    <property type="match status" value="1"/>
</dbReference>
<dbReference type="PANTHER" id="PTHR11994">
    <property type="entry name" value="60S RIBOSOMAL PROTEIN L11-RELATED"/>
    <property type="match status" value="1"/>
</dbReference>
<dbReference type="Pfam" id="PF00281">
    <property type="entry name" value="Ribosomal_L5"/>
    <property type="match status" value="1"/>
</dbReference>
<dbReference type="Pfam" id="PF00673">
    <property type="entry name" value="Ribosomal_L5_C"/>
    <property type="match status" value="1"/>
</dbReference>
<dbReference type="PIRSF" id="PIRSF002161">
    <property type="entry name" value="Ribosomal_L5"/>
    <property type="match status" value="1"/>
</dbReference>
<dbReference type="SUPFAM" id="SSF55282">
    <property type="entry name" value="RL5-like"/>
    <property type="match status" value="1"/>
</dbReference>
<dbReference type="PROSITE" id="PS00358">
    <property type="entry name" value="RIBOSOMAL_L5"/>
    <property type="match status" value="1"/>
</dbReference>
<accession>Q72I16</accession>
<name>RL5_THET2</name>
<comment type="function">
    <text evidence="2">This is one of the proteins that bind and probably mediate the attachment of the 5S RNA into the large ribosomal subunit, where it forms part of the central protuberance. In the 70S ribosome it contacts protein S13 of the 30S subunit (bridge B1b), connecting the 2 subunits; this bridge is implicated in subunit movement. Contacts the P site tRNA; the 5S rRNA and some of its associated proteins might help stabilize positioning of ribosome-bound tRNAs.</text>
</comment>
<comment type="subunit">
    <text evidence="2">Part of the 50S ribosomal subunit; part of the 5S rRNA/L5/L18/L25 subcomplex. Contacts the 5S rRNA and the P site tRNA. Forms a bridge to the 30S subunit in the 70S ribosome.</text>
</comment>
<comment type="similarity">
    <text evidence="2">Belongs to the universal ribosomal protein uL5 family.</text>
</comment>
<reference key="1">
    <citation type="journal article" date="2004" name="Nat. Biotechnol.">
        <title>The genome sequence of the extreme thermophile Thermus thermophilus.</title>
        <authorList>
            <person name="Henne A."/>
            <person name="Brueggemann H."/>
            <person name="Raasch C."/>
            <person name="Wiezer A."/>
            <person name="Hartsch T."/>
            <person name="Liesegang H."/>
            <person name="Johann A."/>
            <person name="Lienard T."/>
            <person name="Gohl O."/>
            <person name="Martinez-Arias R."/>
            <person name="Jacobi C."/>
            <person name="Starkuviene V."/>
            <person name="Schlenczeck S."/>
            <person name="Dencker S."/>
            <person name="Huber R."/>
            <person name="Klenk H.-P."/>
            <person name="Kramer W."/>
            <person name="Merkl R."/>
            <person name="Gottschalk G."/>
            <person name="Fritz H.-J."/>
        </authorList>
    </citation>
    <scope>NUCLEOTIDE SEQUENCE [LARGE SCALE GENOMIC DNA]</scope>
    <source>
        <strain>ATCC BAA-163 / DSM 7039 / HB27</strain>
    </source>
</reference>